<protein>
    <recommendedName>
        <fullName evidence="1">DNA repair protein RecO</fullName>
    </recommendedName>
    <alternativeName>
        <fullName evidence="1">Recombination protein O</fullName>
    </alternativeName>
</protein>
<sequence length="248" mass="28665">MFQKVEGIVIRTTDYGETNKIVTIFSRELGKVSAMARGAKKPKSRLASVSQLMTHGHFLIQMGSGLGTLQQGEIISTMKEIREDIFLTAYASFIVELTDKATEDKKHNPYLFEMLYQTLHYMCEGVDPEVLSLIYQTKMLPVLGMRPYFDTCAICHQETDFVAFSVREGGFLCSRHAEQDQYRIPVGEAVHKLLRLFYHFDLHRLGNVSVKDSTKKQMRLVLNTYYDEYCGIYLKSRRFLEQLDKFQI</sequence>
<gene>
    <name evidence="1" type="primary">recO</name>
    <name type="ordered locus">BCE33L4046</name>
</gene>
<name>RECO_BACCZ</name>
<accession>Q634P2</accession>
<organism>
    <name type="scientific">Bacillus cereus (strain ZK / E33L)</name>
    <dbReference type="NCBI Taxonomy" id="288681"/>
    <lineage>
        <taxon>Bacteria</taxon>
        <taxon>Bacillati</taxon>
        <taxon>Bacillota</taxon>
        <taxon>Bacilli</taxon>
        <taxon>Bacillales</taxon>
        <taxon>Bacillaceae</taxon>
        <taxon>Bacillus</taxon>
        <taxon>Bacillus cereus group</taxon>
    </lineage>
</organism>
<dbReference type="EMBL" id="CP000001">
    <property type="protein sequence ID" value="AAU16224.1"/>
    <property type="molecule type" value="Genomic_DNA"/>
</dbReference>
<dbReference type="RefSeq" id="WP_000487010.1">
    <property type="nucleotide sequence ID" value="NZ_CP009968.1"/>
</dbReference>
<dbReference type="SMR" id="Q634P2"/>
<dbReference type="GeneID" id="93006802"/>
<dbReference type="KEGG" id="bcz:BCE33L4046"/>
<dbReference type="PATRIC" id="fig|288681.22.peg.1345"/>
<dbReference type="Proteomes" id="UP000002612">
    <property type="component" value="Chromosome"/>
</dbReference>
<dbReference type="GO" id="GO:0043590">
    <property type="term" value="C:bacterial nucleoid"/>
    <property type="evidence" value="ECO:0007669"/>
    <property type="project" value="TreeGrafter"/>
</dbReference>
<dbReference type="GO" id="GO:0006310">
    <property type="term" value="P:DNA recombination"/>
    <property type="evidence" value="ECO:0007669"/>
    <property type="project" value="UniProtKB-UniRule"/>
</dbReference>
<dbReference type="GO" id="GO:0006302">
    <property type="term" value="P:double-strand break repair"/>
    <property type="evidence" value="ECO:0007669"/>
    <property type="project" value="TreeGrafter"/>
</dbReference>
<dbReference type="Gene3D" id="2.40.50.140">
    <property type="entry name" value="Nucleic acid-binding proteins"/>
    <property type="match status" value="1"/>
</dbReference>
<dbReference type="Gene3D" id="1.20.1440.120">
    <property type="entry name" value="Recombination protein O, C-terminal domain"/>
    <property type="match status" value="1"/>
</dbReference>
<dbReference type="HAMAP" id="MF_00201">
    <property type="entry name" value="RecO"/>
    <property type="match status" value="1"/>
</dbReference>
<dbReference type="InterPro" id="IPR037278">
    <property type="entry name" value="ARFGAP/RecO"/>
</dbReference>
<dbReference type="InterPro" id="IPR022572">
    <property type="entry name" value="DNA_rep/recomb_RecO_N"/>
</dbReference>
<dbReference type="InterPro" id="IPR012340">
    <property type="entry name" value="NA-bd_OB-fold"/>
</dbReference>
<dbReference type="InterPro" id="IPR003717">
    <property type="entry name" value="RecO"/>
</dbReference>
<dbReference type="InterPro" id="IPR042242">
    <property type="entry name" value="RecO_C"/>
</dbReference>
<dbReference type="NCBIfam" id="TIGR00613">
    <property type="entry name" value="reco"/>
    <property type="match status" value="1"/>
</dbReference>
<dbReference type="PANTHER" id="PTHR33991">
    <property type="entry name" value="DNA REPAIR PROTEIN RECO"/>
    <property type="match status" value="1"/>
</dbReference>
<dbReference type="PANTHER" id="PTHR33991:SF1">
    <property type="entry name" value="DNA REPAIR PROTEIN RECO"/>
    <property type="match status" value="1"/>
</dbReference>
<dbReference type="Pfam" id="PF02565">
    <property type="entry name" value="RecO_C"/>
    <property type="match status" value="1"/>
</dbReference>
<dbReference type="Pfam" id="PF11967">
    <property type="entry name" value="RecO_N"/>
    <property type="match status" value="1"/>
</dbReference>
<dbReference type="SUPFAM" id="SSF57863">
    <property type="entry name" value="ArfGap/RecO-like zinc finger"/>
    <property type="match status" value="1"/>
</dbReference>
<dbReference type="SUPFAM" id="SSF50249">
    <property type="entry name" value="Nucleic acid-binding proteins"/>
    <property type="match status" value="1"/>
</dbReference>
<evidence type="ECO:0000255" key="1">
    <source>
        <dbReference type="HAMAP-Rule" id="MF_00201"/>
    </source>
</evidence>
<comment type="function">
    <text evidence="1">Involved in DNA repair and RecF pathway recombination.</text>
</comment>
<comment type="similarity">
    <text evidence="1">Belongs to the RecO family.</text>
</comment>
<reference key="1">
    <citation type="journal article" date="2006" name="J. Bacteriol.">
        <title>Pathogenomic sequence analysis of Bacillus cereus and Bacillus thuringiensis isolates closely related to Bacillus anthracis.</title>
        <authorList>
            <person name="Han C.S."/>
            <person name="Xie G."/>
            <person name="Challacombe J.F."/>
            <person name="Altherr M.R."/>
            <person name="Bhotika S.S."/>
            <person name="Bruce D."/>
            <person name="Campbell C.S."/>
            <person name="Campbell M.L."/>
            <person name="Chen J."/>
            <person name="Chertkov O."/>
            <person name="Cleland C."/>
            <person name="Dimitrijevic M."/>
            <person name="Doggett N.A."/>
            <person name="Fawcett J.J."/>
            <person name="Glavina T."/>
            <person name="Goodwin L.A."/>
            <person name="Hill K.K."/>
            <person name="Hitchcock P."/>
            <person name="Jackson P.J."/>
            <person name="Keim P."/>
            <person name="Kewalramani A.R."/>
            <person name="Longmire J."/>
            <person name="Lucas S."/>
            <person name="Malfatti S."/>
            <person name="McMurry K."/>
            <person name="Meincke L.J."/>
            <person name="Misra M."/>
            <person name="Moseman B.L."/>
            <person name="Mundt M."/>
            <person name="Munk A.C."/>
            <person name="Okinaka R.T."/>
            <person name="Parson-Quintana B."/>
            <person name="Reilly L.P."/>
            <person name="Richardson P."/>
            <person name="Robinson D.L."/>
            <person name="Rubin E."/>
            <person name="Saunders E."/>
            <person name="Tapia R."/>
            <person name="Tesmer J.G."/>
            <person name="Thayer N."/>
            <person name="Thompson L.S."/>
            <person name="Tice H."/>
            <person name="Ticknor L.O."/>
            <person name="Wills P.L."/>
            <person name="Brettin T.S."/>
            <person name="Gilna P."/>
        </authorList>
    </citation>
    <scope>NUCLEOTIDE SEQUENCE [LARGE SCALE GENOMIC DNA]</scope>
    <source>
        <strain>ZK / E33L</strain>
    </source>
</reference>
<keyword id="KW-0227">DNA damage</keyword>
<keyword id="KW-0233">DNA recombination</keyword>
<keyword id="KW-0234">DNA repair</keyword>
<feature type="chain" id="PRO_0000204928" description="DNA repair protein RecO">
    <location>
        <begin position="1"/>
        <end position="248"/>
    </location>
</feature>
<proteinExistence type="inferred from homology"/>